<evidence type="ECO:0000255" key="1">
    <source>
        <dbReference type="HAMAP-Rule" id="MF_00385"/>
    </source>
</evidence>
<evidence type="ECO:0000256" key="2">
    <source>
        <dbReference type="SAM" id="MobiDB-lite"/>
    </source>
</evidence>
<evidence type="ECO:0000305" key="3"/>
<proteinExistence type="inferred from homology"/>
<keyword id="KW-1185">Reference proteome</keyword>
<keyword id="KW-0687">Ribonucleoprotein</keyword>
<keyword id="KW-0689">Ribosomal protein</keyword>
<name>RS16_BEII9</name>
<reference key="1">
    <citation type="journal article" date="2010" name="J. Bacteriol.">
        <title>Complete genome sequence of Beijerinckia indica subsp. indica.</title>
        <authorList>
            <person name="Tamas I."/>
            <person name="Dedysh S.N."/>
            <person name="Liesack W."/>
            <person name="Stott M.B."/>
            <person name="Alam M."/>
            <person name="Murrell J.C."/>
            <person name="Dunfield P.F."/>
        </authorList>
    </citation>
    <scope>NUCLEOTIDE SEQUENCE [LARGE SCALE GENOMIC DNA]</scope>
    <source>
        <strain>ATCC 9039 / DSM 1715 / NCIMB 8712</strain>
    </source>
</reference>
<dbReference type="EMBL" id="CP001016">
    <property type="protein sequence ID" value="ACB96909.1"/>
    <property type="molecule type" value="Genomic_DNA"/>
</dbReference>
<dbReference type="RefSeq" id="WP_012386257.1">
    <property type="nucleotide sequence ID" value="NC_010581.1"/>
</dbReference>
<dbReference type="SMR" id="B2IDX7"/>
<dbReference type="STRING" id="395963.Bind_3352"/>
<dbReference type="KEGG" id="bid:Bind_3352"/>
<dbReference type="eggNOG" id="COG0228">
    <property type="taxonomic scope" value="Bacteria"/>
</dbReference>
<dbReference type="HOGENOM" id="CLU_100590_3_1_5"/>
<dbReference type="OrthoDB" id="9807878at2"/>
<dbReference type="Proteomes" id="UP000001695">
    <property type="component" value="Chromosome"/>
</dbReference>
<dbReference type="GO" id="GO:0005737">
    <property type="term" value="C:cytoplasm"/>
    <property type="evidence" value="ECO:0007669"/>
    <property type="project" value="UniProtKB-ARBA"/>
</dbReference>
<dbReference type="GO" id="GO:0015935">
    <property type="term" value="C:small ribosomal subunit"/>
    <property type="evidence" value="ECO:0007669"/>
    <property type="project" value="TreeGrafter"/>
</dbReference>
<dbReference type="GO" id="GO:0003735">
    <property type="term" value="F:structural constituent of ribosome"/>
    <property type="evidence" value="ECO:0007669"/>
    <property type="project" value="InterPro"/>
</dbReference>
<dbReference type="GO" id="GO:0006412">
    <property type="term" value="P:translation"/>
    <property type="evidence" value="ECO:0007669"/>
    <property type="project" value="UniProtKB-UniRule"/>
</dbReference>
<dbReference type="Gene3D" id="3.30.1320.10">
    <property type="match status" value="1"/>
</dbReference>
<dbReference type="HAMAP" id="MF_00385">
    <property type="entry name" value="Ribosomal_bS16"/>
    <property type="match status" value="1"/>
</dbReference>
<dbReference type="InterPro" id="IPR000307">
    <property type="entry name" value="Ribosomal_bS16"/>
</dbReference>
<dbReference type="InterPro" id="IPR020592">
    <property type="entry name" value="Ribosomal_bS16_CS"/>
</dbReference>
<dbReference type="InterPro" id="IPR023803">
    <property type="entry name" value="Ribosomal_bS16_dom_sf"/>
</dbReference>
<dbReference type="NCBIfam" id="TIGR00002">
    <property type="entry name" value="S16"/>
    <property type="match status" value="1"/>
</dbReference>
<dbReference type="PANTHER" id="PTHR12919">
    <property type="entry name" value="30S RIBOSOMAL PROTEIN S16"/>
    <property type="match status" value="1"/>
</dbReference>
<dbReference type="PANTHER" id="PTHR12919:SF20">
    <property type="entry name" value="SMALL RIBOSOMAL SUBUNIT PROTEIN BS16M"/>
    <property type="match status" value="1"/>
</dbReference>
<dbReference type="Pfam" id="PF00886">
    <property type="entry name" value="Ribosomal_S16"/>
    <property type="match status" value="1"/>
</dbReference>
<dbReference type="SUPFAM" id="SSF54565">
    <property type="entry name" value="Ribosomal protein S16"/>
    <property type="match status" value="1"/>
</dbReference>
<dbReference type="PROSITE" id="PS00732">
    <property type="entry name" value="RIBOSOMAL_S16"/>
    <property type="match status" value="1"/>
</dbReference>
<accession>B2IDX7</accession>
<gene>
    <name evidence="1" type="primary">rpsP</name>
    <name type="ordered locus">Bind_3352</name>
</gene>
<feature type="chain" id="PRO_1000196337" description="Small ribosomal subunit protein bS16">
    <location>
        <begin position="1"/>
        <end position="120"/>
    </location>
</feature>
<feature type="region of interest" description="Disordered" evidence="2">
    <location>
        <begin position="84"/>
        <end position="120"/>
    </location>
</feature>
<feature type="compositionally biased region" description="Low complexity" evidence="2">
    <location>
        <begin position="103"/>
        <end position="120"/>
    </location>
</feature>
<organism>
    <name type="scientific">Beijerinckia indica subsp. indica (strain ATCC 9039 / DSM 1715 / NCIMB 8712)</name>
    <dbReference type="NCBI Taxonomy" id="395963"/>
    <lineage>
        <taxon>Bacteria</taxon>
        <taxon>Pseudomonadati</taxon>
        <taxon>Pseudomonadota</taxon>
        <taxon>Alphaproteobacteria</taxon>
        <taxon>Hyphomicrobiales</taxon>
        <taxon>Beijerinckiaceae</taxon>
        <taxon>Beijerinckia</taxon>
    </lineage>
</organism>
<sequence>MSLKIRLARGGAKKRPFYRIVVADARAPRDGRFIERIGTFDPLKAKNAPDRIVLDAEKAKDWLAKGAQPTDRVARLLDGLEIIKRESRNNPQQGQPKKKAQERAAAAAAAAEKAASEAAA</sequence>
<comment type="similarity">
    <text evidence="1">Belongs to the bacterial ribosomal protein bS16 family.</text>
</comment>
<protein>
    <recommendedName>
        <fullName evidence="1">Small ribosomal subunit protein bS16</fullName>
    </recommendedName>
    <alternativeName>
        <fullName evidence="3">30S ribosomal protein S16</fullName>
    </alternativeName>
</protein>